<organism>
    <name type="scientific">Coxiella burnetii (strain RSA 331 / Henzerling II)</name>
    <dbReference type="NCBI Taxonomy" id="360115"/>
    <lineage>
        <taxon>Bacteria</taxon>
        <taxon>Pseudomonadati</taxon>
        <taxon>Pseudomonadota</taxon>
        <taxon>Gammaproteobacteria</taxon>
        <taxon>Legionellales</taxon>
        <taxon>Coxiellaceae</taxon>
        <taxon>Coxiella</taxon>
    </lineage>
</organism>
<reference key="1">
    <citation type="submission" date="2007-11" db="EMBL/GenBank/DDBJ databases">
        <title>Genome sequencing of phylogenetically and phenotypically diverse Coxiella burnetii isolates.</title>
        <authorList>
            <person name="Seshadri R."/>
            <person name="Samuel J.E."/>
        </authorList>
    </citation>
    <scope>NUCLEOTIDE SEQUENCE [LARGE SCALE GENOMIC DNA]</scope>
    <source>
        <strain>RSA 331 / Henzerling II</strain>
    </source>
</reference>
<keyword id="KW-0028">Amino-acid biosynthesis</keyword>
<keyword id="KW-0963">Cytoplasm</keyword>
<keyword id="KW-0413">Isomerase</keyword>
<keyword id="KW-0457">Lysine biosynthesis</keyword>
<dbReference type="EC" id="5.1.1.7" evidence="1"/>
<dbReference type="EMBL" id="CP000890">
    <property type="protein sequence ID" value="ABX78285.1"/>
    <property type="molecule type" value="Genomic_DNA"/>
</dbReference>
<dbReference type="RefSeq" id="WP_005769680.1">
    <property type="nucleotide sequence ID" value="NC_010117.1"/>
</dbReference>
<dbReference type="SMR" id="A9N9J6"/>
<dbReference type="KEGG" id="cbs:COXBURSA331_A0113"/>
<dbReference type="HOGENOM" id="CLU_053306_1_1_6"/>
<dbReference type="UniPathway" id="UPA00034">
    <property type="reaction ID" value="UER00025"/>
</dbReference>
<dbReference type="GO" id="GO:0005829">
    <property type="term" value="C:cytosol"/>
    <property type="evidence" value="ECO:0007669"/>
    <property type="project" value="TreeGrafter"/>
</dbReference>
<dbReference type="GO" id="GO:0008837">
    <property type="term" value="F:diaminopimelate epimerase activity"/>
    <property type="evidence" value="ECO:0007669"/>
    <property type="project" value="UniProtKB-UniRule"/>
</dbReference>
<dbReference type="GO" id="GO:0009089">
    <property type="term" value="P:lysine biosynthetic process via diaminopimelate"/>
    <property type="evidence" value="ECO:0007669"/>
    <property type="project" value="UniProtKB-UniRule"/>
</dbReference>
<dbReference type="FunFam" id="3.10.310.10:FF:000001">
    <property type="entry name" value="Diaminopimelate epimerase"/>
    <property type="match status" value="1"/>
</dbReference>
<dbReference type="Gene3D" id="3.10.310.10">
    <property type="entry name" value="Diaminopimelate Epimerase, Chain A, domain 1"/>
    <property type="match status" value="2"/>
</dbReference>
<dbReference type="HAMAP" id="MF_00197">
    <property type="entry name" value="DAP_epimerase"/>
    <property type="match status" value="1"/>
</dbReference>
<dbReference type="InterPro" id="IPR018510">
    <property type="entry name" value="DAP_epimerase_AS"/>
</dbReference>
<dbReference type="InterPro" id="IPR001653">
    <property type="entry name" value="DAP_epimerase_DapF"/>
</dbReference>
<dbReference type="NCBIfam" id="TIGR00652">
    <property type="entry name" value="DapF"/>
    <property type="match status" value="1"/>
</dbReference>
<dbReference type="PANTHER" id="PTHR31689:SF0">
    <property type="entry name" value="DIAMINOPIMELATE EPIMERASE"/>
    <property type="match status" value="1"/>
</dbReference>
<dbReference type="PANTHER" id="PTHR31689">
    <property type="entry name" value="DIAMINOPIMELATE EPIMERASE, CHLOROPLASTIC"/>
    <property type="match status" value="1"/>
</dbReference>
<dbReference type="Pfam" id="PF01678">
    <property type="entry name" value="DAP_epimerase"/>
    <property type="match status" value="2"/>
</dbReference>
<dbReference type="SUPFAM" id="SSF54506">
    <property type="entry name" value="Diaminopimelate epimerase-like"/>
    <property type="match status" value="2"/>
</dbReference>
<dbReference type="PROSITE" id="PS01326">
    <property type="entry name" value="DAP_EPIMERASE"/>
    <property type="match status" value="1"/>
</dbReference>
<proteinExistence type="inferred from homology"/>
<protein>
    <recommendedName>
        <fullName evidence="1">Diaminopimelate epimerase</fullName>
        <shortName evidence="1">DAP epimerase</shortName>
        <ecNumber evidence="1">5.1.1.7</ecNumber>
    </recommendedName>
    <alternativeName>
        <fullName evidence="1">PLP-independent amino acid racemase</fullName>
    </alternativeName>
</protein>
<gene>
    <name evidence="1" type="primary">dapF</name>
    <name type="ordered locus">COXBURSA331_A0113</name>
</gene>
<comment type="function">
    <text evidence="1">Catalyzes the stereoinversion of LL-2,6-diaminopimelate (L,L-DAP) to meso-diaminopimelate (meso-DAP), a precursor of L-lysine and an essential component of the bacterial peptidoglycan.</text>
</comment>
<comment type="catalytic activity">
    <reaction evidence="1">
        <text>(2S,6S)-2,6-diaminopimelate = meso-2,6-diaminopimelate</text>
        <dbReference type="Rhea" id="RHEA:15393"/>
        <dbReference type="ChEBI" id="CHEBI:57609"/>
        <dbReference type="ChEBI" id="CHEBI:57791"/>
        <dbReference type="EC" id="5.1.1.7"/>
    </reaction>
</comment>
<comment type="pathway">
    <text evidence="1">Amino-acid biosynthesis; L-lysine biosynthesis via DAP pathway; DL-2,6-diaminopimelate from LL-2,6-diaminopimelate: step 1/1.</text>
</comment>
<comment type="subunit">
    <text evidence="1">Homodimer.</text>
</comment>
<comment type="subcellular location">
    <subcellularLocation>
        <location evidence="1">Cytoplasm</location>
    </subcellularLocation>
</comment>
<comment type="similarity">
    <text evidence="1">Belongs to the diaminopimelate epimerase family.</text>
</comment>
<accession>A9N9J6</accession>
<evidence type="ECO:0000255" key="1">
    <source>
        <dbReference type="HAMAP-Rule" id="MF_00197"/>
    </source>
</evidence>
<feature type="chain" id="PRO_1000077696" description="Diaminopimelate epimerase">
    <location>
        <begin position="1"/>
        <end position="276"/>
    </location>
</feature>
<feature type="active site" description="Proton donor" evidence="1">
    <location>
        <position position="75"/>
    </location>
</feature>
<feature type="active site" description="Proton acceptor" evidence="1">
    <location>
        <position position="219"/>
    </location>
</feature>
<feature type="binding site" evidence="1">
    <location>
        <position position="13"/>
    </location>
    <ligand>
        <name>substrate</name>
    </ligand>
</feature>
<feature type="binding site" evidence="1">
    <location>
        <position position="46"/>
    </location>
    <ligand>
        <name>substrate</name>
    </ligand>
</feature>
<feature type="binding site" evidence="1">
    <location>
        <position position="66"/>
    </location>
    <ligand>
        <name>substrate</name>
    </ligand>
</feature>
<feature type="binding site" evidence="1">
    <location>
        <begin position="76"/>
        <end position="77"/>
    </location>
    <ligand>
        <name>substrate</name>
    </ligand>
</feature>
<feature type="binding site" evidence="1">
    <location>
        <position position="159"/>
    </location>
    <ligand>
        <name>substrate</name>
    </ligand>
</feature>
<feature type="binding site" evidence="1">
    <location>
        <position position="192"/>
    </location>
    <ligand>
        <name>substrate</name>
    </ligand>
</feature>
<feature type="binding site" evidence="1">
    <location>
        <begin position="210"/>
        <end position="211"/>
    </location>
    <ligand>
        <name>substrate</name>
    </ligand>
</feature>
<feature type="binding site" evidence="1">
    <location>
        <begin position="220"/>
        <end position="221"/>
    </location>
    <ligand>
        <name>substrate</name>
    </ligand>
</feature>
<feature type="site" description="Could be important to modulate the pK values of the two catalytic cysteine residues" evidence="1">
    <location>
        <position position="161"/>
    </location>
</feature>
<feature type="site" description="Could be important to modulate the pK values of the two catalytic cysteine residues" evidence="1">
    <location>
        <position position="210"/>
    </location>
</feature>
<feature type="site" description="Important for dimerization" evidence="1">
    <location>
        <position position="270"/>
    </location>
</feature>
<name>DAPF_COXBR</name>
<sequence>MKVNFTKMQGSGNDFVVIDATKTPFQLTTSQIQKMANRRFGVGFDQLLVIEPPKNNSVDFHFRIFNADGSEVGQCGNGARCIARFIRAHQLSDREELRVSTLNEVLELKIQPDGKVSVKMGVPRFEPTEIPFIASGVANFYDIAVDNQIVKLGVVNIGNPHAIIPVERINAEEVGKLGARLSVHECFPEGANVGFMQVIDPQNIRLRVYERGTGETLACGSNACAAVAVGRRCGLLQERVVVSQPGGSLTIDWQGPLTPVTMTGPATTVFCGEWLD</sequence>